<comment type="function">
    <text evidence="4">Catalyzes the reduction of hydroperoxides in a glutathione-dependent manner thus regulating cellular redox homeostasis. Can reduce small soluble hydroperoxides such as H2O2, cumene hydroperoxide and tert-butyl hydroperoxide, as well as several fatty acid-derived hydroperoxides. In platelets catalyzes the reduction of 12-hydroperoxyeicosatetraenoic acid, the primary product of the arachidonate 12-lipoxygenase pathway.</text>
</comment>
<comment type="catalytic activity">
    <reaction evidence="4">
        <text>2 glutathione + H2O2 = glutathione disulfide + 2 H2O</text>
        <dbReference type="Rhea" id="RHEA:16833"/>
        <dbReference type="ChEBI" id="CHEBI:15377"/>
        <dbReference type="ChEBI" id="CHEBI:16240"/>
        <dbReference type="ChEBI" id="CHEBI:57925"/>
        <dbReference type="ChEBI" id="CHEBI:58297"/>
        <dbReference type="EC" id="1.11.1.9"/>
    </reaction>
    <physiologicalReaction direction="left-to-right" evidence="4">
        <dbReference type="Rhea" id="RHEA:16834"/>
    </physiologicalReaction>
</comment>
<comment type="catalytic activity">
    <reaction evidence="3">
        <text>a hydroperoxy polyunsaturated fatty acid + 2 glutathione = a hydroxy polyunsaturated fatty acid + glutathione disulfide + H2O</text>
        <dbReference type="Rhea" id="RHEA:19057"/>
        <dbReference type="ChEBI" id="CHEBI:15377"/>
        <dbReference type="ChEBI" id="CHEBI:57925"/>
        <dbReference type="ChEBI" id="CHEBI:58297"/>
        <dbReference type="ChEBI" id="CHEBI:131871"/>
        <dbReference type="ChEBI" id="CHEBI:134019"/>
        <dbReference type="EC" id="1.11.1.12"/>
    </reaction>
    <physiologicalReaction direction="left-to-right" evidence="3">
        <dbReference type="Rhea" id="RHEA:19058"/>
    </physiologicalReaction>
</comment>
<comment type="catalytic activity">
    <reaction evidence="3">
        <text>tert-butyl hydroperoxide + 2 glutathione = tert-butanol + glutathione disulfide + H2O</text>
        <dbReference type="Rhea" id="RHEA:69412"/>
        <dbReference type="ChEBI" id="CHEBI:15377"/>
        <dbReference type="ChEBI" id="CHEBI:45895"/>
        <dbReference type="ChEBI" id="CHEBI:57925"/>
        <dbReference type="ChEBI" id="CHEBI:58297"/>
        <dbReference type="ChEBI" id="CHEBI:64090"/>
    </reaction>
    <physiologicalReaction direction="left-to-right" evidence="3">
        <dbReference type="Rhea" id="RHEA:69413"/>
    </physiologicalReaction>
</comment>
<comment type="catalytic activity">
    <reaction evidence="3">
        <text>cumene hydroperoxide + 2 glutathione = 2-phenylpropan-2-ol + glutathione disulfide + H2O</text>
        <dbReference type="Rhea" id="RHEA:69651"/>
        <dbReference type="ChEBI" id="CHEBI:15377"/>
        <dbReference type="ChEBI" id="CHEBI:57925"/>
        <dbReference type="ChEBI" id="CHEBI:58297"/>
        <dbReference type="ChEBI" id="CHEBI:78673"/>
        <dbReference type="ChEBI" id="CHEBI:131607"/>
    </reaction>
    <physiologicalReaction direction="left-to-right" evidence="3">
        <dbReference type="Rhea" id="RHEA:69652"/>
    </physiologicalReaction>
</comment>
<comment type="catalytic activity">
    <reaction evidence="3">
        <text>(13S)-hydroperoxy-(9Z,11E)-octadecadienoate + 2 glutathione = (13S)-hydroxy-(9Z,11E)-octadecadienoate + glutathione disulfide + H2O</text>
        <dbReference type="Rhea" id="RHEA:48888"/>
        <dbReference type="ChEBI" id="CHEBI:15377"/>
        <dbReference type="ChEBI" id="CHEBI:57466"/>
        <dbReference type="ChEBI" id="CHEBI:57925"/>
        <dbReference type="ChEBI" id="CHEBI:58297"/>
        <dbReference type="ChEBI" id="CHEBI:90850"/>
    </reaction>
    <physiologicalReaction direction="left-to-right" evidence="3">
        <dbReference type="Rhea" id="RHEA:48889"/>
    </physiologicalReaction>
</comment>
<comment type="catalytic activity">
    <reaction evidence="3">
        <text>(9S)-hydroperoxy-(10E,12Z)-octadecadienoate + 2 glutathione = (9S)-hydroxy-(10E,12Z)-octadecadienoate + glutathione disulfide + H2O</text>
        <dbReference type="Rhea" id="RHEA:76687"/>
        <dbReference type="ChEBI" id="CHEBI:15377"/>
        <dbReference type="ChEBI" id="CHEBI:57925"/>
        <dbReference type="ChEBI" id="CHEBI:58297"/>
        <dbReference type="ChEBI" id="CHEBI:60955"/>
        <dbReference type="ChEBI" id="CHEBI:77852"/>
    </reaction>
    <physiologicalReaction direction="left-to-right" evidence="3">
        <dbReference type="Rhea" id="RHEA:76688"/>
    </physiologicalReaction>
</comment>
<comment type="catalytic activity">
    <reaction evidence="3">
        <text>(5S)-hydroperoxy-(6E,8Z,11Z,14Z)-eicosatetraenoate + 2 glutathione = (5S)-hydroxy-(6E,8Z,11Z,14Z)-eicosatetraenoate + glutathione disulfide + H2O</text>
        <dbReference type="Rhea" id="RHEA:48620"/>
        <dbReference type="ChEBI" id="CHEBI:15377"/>
        <dbReference type="ChEBI" id="CHEBI:57450"/>
        <dbReference type="ChEBI" id="CHEBI:57925"/>
        <dbReference type="ChEBI" id="CHEBI:58297"/>
        <dbReference type="ChEBI" id="CHEBI:90632"/>
    </reaction>
    <physiologicalReaction direction="left-to-right" evidence="3">
        <dbReference type="Rhea" id="RHEA:48621"/>
    </physiologicalReaction>
</comment>
<comment type="catalytic activity">
    <reaction evidence="4">
        <text>(12S)-hydroperoxy-(5Z,8Z,10E,14Z)-eicosatetraenoate + 2 glutathione = (12S)-hydroxy-(5Z,8Z,10E,14Z)-eicosatetraenoate + glutathione disulfide + H2O</text>
        <dbReference type="Rhea" id="RHEA:50708"/>
        <dbReference type="ChEBI" id="CHEBI:15377"/>
        <dbReference type="ChEBI" id="CHEBI:57444"/>
        <dbReference type="ChEBI" id="CHEBI:57925"/>
        <dbReference type="ChEBI" id="CHEBI:58297"/>
        <dbReference type="ChEBI" id="CHEBI:90680"/>
    </reaction>
    <physiologicalReaction direction="left-to-right" evidence="4">
        <dbReference type="Rhea" id="RHEA:50709"/>
    </physiologicalReaction>
</comment>
<comment type="catalytic activity">
    <reaction evidence="3">
        <text>(12R)-hydroperoxy-(5Z,8Z,10E,14Z)-eicosatetraenoate + 2 glutathione = (12R)-hydroxy-(5Z,8Z,10E,14Z)-eicosatetraenoate + glutathione disulfide + H2O</text>
        <dbReference type="Rhea" id="RHEA:76691"/>
        <dbReference type="ChEBI" id="CHEBI:15377"/>
        <dbReference type="ChEBI" id="CHEBI:57925"/>
        <dbReference type="ChEBI" id="CHEBI:58297"/>
        <dbReference type="ChEBI" id="CHEBI:75230"/>
        <dbReference type="ChEBI" id="CHEBI:83343"/>
    </reaction>
    <physiologicalReaction direction="left-to-right" evidence="3">
        <dbReference type="Rhea" id="RHEA:76692"/>
    </physiologicalReaction>
</comment>
<comment type="catalytic activity">
    <reaction evidence="3">
        <text>(15S)-hydroperoxy-(5Z,8Z,11Z,13E)-eicosatetraenoate + 2 glutathione = (15S)-hydroxy-(5Z,8Z,11Z,13E)-eicosatetraenoate + glutathione disulfide + H2O</text>
        <dbReference type="Rhea" id="RHEA:76695"/>
        <dbReference type="ChEBI" id="CHEBI:15377"/>
        <dbReference type="ChEBI" id="CHEBI:57409"/>
        <dbReference type="ChEBI" id="CHEBI:57446"/>
        <dbReference type="ChEBI" id="CHEBI:57925"/>
        <dbReference type="ChEBI" id="CHEBI:58297"/>
    </reaction>
    <physiologicalReaction direction="left-to-right" evidence="3">
        <dbReference type="Rhea" id="RHEA:76696"/>
    </physiologicalReaction>
</comment>
<comment type="catalytic activity">
    <reaction evidence="3">
        <text>(5S)-hydroperoxy-(6E,8Z,11Z,14Z,17Z)-eicosapentaenoate + 2 glutathione = (5S)-hydroxy-(6E,8Z,11Z,14Z,17Z)-eicosapentaenoate + glutathione disulfide + H2O</text>
        <dbReference type="Rhea" id="RHEA:76699"/>
        <dbReference type="ChEBI" id="CHEBI:15377"/>
        <dbReference type="ChEBI" id="CHEBI:57925"/>
        <dbReference type="ChEBI" id="CHEBI:58297"/>
        <dbReference type="ChEBI" id="CHEBI:195399"/>
        <dbReference type="ChEBI" id="CHEBI:195400"/>
    </reaction>
    <physiologicalReaction direction="left-to-right" evidence="3">
        <dbReference type="Rhea" id="RHEA:76700"/>
    </physiologicalReaction>
</comment>
<comment type="catalytic activity">
    <reaction evidence="3">
        <text>(12S)-hydroperoxy-(5Z,8Z,10E,14Z,17Z)-eicosapentaenoate + 2 glutathione = (12S)-hydroxy-(5Z,8Z,10E,14Z,17Z)-eicosapentaenoate + glutathione disulfide + H2O</text>
        <dbReference type="Rhea" id="RHEA:76703"/>
        <dbReference type="ChEBI" id="CHEBI:15377"/>
        <dbReference type="ChEBI" id="CHEBI:57925"/>
        <dbReference type="ChEBI" id="CHEBI:58297"/>
        <dbReference type="ChEBI" id="CHEBI:90772"/>
        <dbReference type="ChEBI" id="CHEBI:195401"/>
    </reaction>
    <physiologicalReaction direction="left-to-right" evidence="3">
        <dbReference type="Rhea" id="RHEA:76704"/>
    </physiologicalReaction>
</comment>
<comment type="catalytic activity">
    <reaction evidence="3">
        <text>(15S)-hydroperoxy-(5Z,8Z,11Z,13E,17Z)-eicosapentaenoate + 2 glutathione = (15S)-hydroxy-(5Z,8Z,11Z,13E,17Z)-eicosapentaenoate + glutathione disulfide + H2O</text>
        <dbReference type="Rhea" id="RHEA:76707"/>
        <dbReference type="ChEBI" id="CHEBI:15377"/>
        <dbReference type="ChEBI" id="CHEBI:57925"/>
        <dbReference type="ChEBI" id="CHEBI:58297"/>
        <dbReference type="ChEBI" id="CHEBI:132087"/>
        <dbReference type="ChEBI" id="CHEBI:194369"/>
    </reaction>
    <physiologicalReaction direction="left-to-right" evidence="3">
        <dbReference type="Rhea" id="RHEA:76708"/>
    </physiologicalReaction>
</comment>
<comment type="catalytic activity">
    <reaction evidence="3">
        <text>(15S)-hydroperoxy-(11Z,13E)-eicosadienoate + 2 glutathione = (15S)-hydroxy-(11Z,13E)-eicosadienoate + glutathione disulfide + H2O</text>
        <dbReference type="Rhea" id="RHEA:76711"/>
        <dbReference type="ChEBI" id="CHEBI:15377"/>
        <dbReference type="ChEBI" id="CHEBI:57925"/>
        <dbReference type="ChEBI" id="CHEBI:58297"/>
        <dbReference type="ChEBI" id="CHEBI:144832"/>
        <dbReference type="ChEBI" id="CHEBI:195402"/>
    </reaction>
    <physiologicalReaction direction="left-to-right" evidence="3">
        <dbReference type="Rhea" id="RHEA:76712"/>
    </physiologicalReaction>
</comment>
<comment type="catalytic activity">
    <reaction evidence="3">
        <text>(17S)-hydroperoxy-(4Z,7Z,10Z,13Z,15E,19Z)-docosahexaenoate + 2 glutathione = (17S)-hydroxy-(4Z,7Z,10Z,13Z,15E,19Z)-docosahexaenoate + glutathione disulfide + H2O</text>
        <dbReference type="Rhea" id="RHEA:76715"/>
        <dbReference type="ChEBI" id="CHEBI:15377"/>
        <dbReference type="ChEBI" id="CHEBI:57925"/>
        <dbReference type="ChEBI" id="CHEBI:58297"/>
        <dbReference type="ChEBI" id="CHEBI:133795"/>
        <dbReference type="ChEBI" id="CHEBI:195403"/>
    </reaction>
    <physiologicalReaction direction="left-to-right" evidence="3">
        <dbReference type="Rhea" id="RHEA:76716"/>
    </physiologicalReaction>
</comment>
<comment type="subunit">
    <text evidence="4">Homotetramer. Interacts with MIEN1 (By similarity).</text>
</comment>
<comment type="subcellular location">
    <subcellularLocation>
        <location evidence="4">Cytoplasm</location>
    </subcellularLocation>
    <subcellularLocation>
        <location evidence="4">Mitochondrion</location>
    </subcellularLocation>
</comment>
<comment type="tissue specificity">
    <text evidence="5">Expressed in liver and lung.</text>
</comment>
<comment type="PTM">
    <text evidence="4">During periods of oxidative stress, Sec-47 may react with a superoxide radical, irreversibly lose hydroselenide and be converted to dehydroalanine.</text>
</comment>
<comment type="similarity">
    <text evidence="7">Belongs to the glutathione peroxidase family.</text>
</comment>
<protein>
    <recommendedName>
        <fullName evidence="7">Glutathione peroxidase 1</fullName>
        <shortName>GPx-1</shortName>
        <shortName>GSHPx-1</shortName>
        <ecNumber evidence="3">1.11.1.9</ecNumber>
    </recommendedName>
    <alternativeName>
        <fullName>Cellular glutathione peroxidase</fullName>
    </alternativeName>
    <alternativeName>
        <fullName>Phospholipid-hydroperoxide glutathione peroxidase GPX1</fullName>
        <ecNumber evidence="3">1.11.1.12</ecNumber>
    </alternativeName>
</protein>
<organism>
    <name type="scientific">Rattus norvegicus</name>
    <name type="common">Rat</name>
    <dbReference type="NCBI Taxonomy" id="10116"/>
    <lineage>
        <taxon>Eukaryota</taxon>
        <taxon>Metazoa</taxon>
        <taxon>Chordata</taxon>
        <taxon>Craniata</taxon>
        <taxon>Vertebrata</taxon>
        <taxon>Euteleostomi</taxon>
        <taxon>Mammalia</taxon>
        <taxon>Eutheria</taxon>
        <taxon>Euarchontoglires</taxon>
        <taxon>Glires</taxon>
        <taxon>Rodentia</taxon>
        <taxon>Myomorpha</taxon>
        <taxon>Muroidea</taxon>
        <taxon>Muridae</taxon>
        <taxon>Murinae</taxon>
        <taxon>Rattus</taxon>
    </lineage>
</organism>
<dbReference type="EC" id="1.11.1.9" evidence="3"/>
<dbReference type="EC" id="1.11.1.12" evidence="3"/>
<dbReference type="EMBL" id="M21210">
    <property type="protein sequence ID" value="AAB95647.2"/>
    <property type="molecule type" value="mRNA"/>
</dbReference>
<dbReference type="EMBL" id="X07365">
    <property type="protein sequence ID" value="CAB43593.1"/>
    <property type="molecule type" value="mRNA"/>
</dbReference>
<dbReference type="EMBL" id="X12367">
    <property type="protein sequence ID" value="CAA30928.2"/>
    <property type="molecule type" value="mRNA"/>
</dbReference>
<dbReference type="EMBL" id="S50336">
    <property type="protein sequence ID" value="AAA12407.2"/>
    <property type="molecule type" value="Genomic_DNA"/>
</dbReference>
<dbReference type="EMBL" id="S41066">
    <property type="protein sequence ID" value="AAK72702.1"/>
    <property type="molecule type" value="mRNA"/>
</dbReference>
<dbReference type="EMBL" id="AB004231">
    <property type="protein sequence ID" value="BAA20399.2"/>
    <property type="molecule type" value="Genomic_DNA"/>
</dbReference>
<dbReference type="PIR" id="A30793">
    <property type="entry name" value="OPRTE"/>
</dbReference>
<dbReference type="RefSeq" id="NP_110453.3">
    <property type="nucleotide sequence ID" value="NM_030826.4"/>
</dbReference>
<dbReference type="BioGRID" id="246569">
    <property type="interactions" value="2"/>
</dbReference>
<dbReference type="FunCoup" id="P04041">
    <property type="interactions" value="1256"/>
</dbReference>
<dbReference type="IntAct" id="P04041">
    <property type="interactions" value="1"/>
</dbReference>
<dbReference type="STRING" id="10116.ENSRNOP00000066577"/>
<dbReference type="PeroxiBase" id="3730">
    <property type="entry name" value="RnoGPx01"/>
</dbReference>
<dbReference type="GlyGen" id="P04041">
    <property type="glycosylation" value="1 site, 1 O-linked glycan (1 site)"/>
</dbReference>
<dbReference type="iPTMnet" id="P04041"/>
<dbReference type="PhosphoSitePlus" id="P04041"/>
<dbReference type="SwissPalm" id="P04041"/>
<dbReference type="jPOST" id="P04041"/>
<dbReference type="PaxDb" id="10116-ENSRNOP00000066577"/>
<dbReference type="Ensembl" id="ENSRNOT00000073247.3">
    <property type="protein sequence ID" value="ENSRNOP00000066577.3"/>
    <property type="gene ID" value="ENSRNOG00000048812.3"/>
</dbReference>
<dbReference type="GeneID" id="24404"/>
<dbReference type="KEGG" id="rno:24404"/>
<dbReference type="AGR" id="RGD:2729"/>
<dbReference type="CTD" id="2876"/>
<dbReference type="RGD" id="2729">
    <property type="gene designation" value="Gpx1"/>
</dbReference>
<dbReference type="eggNOG" id="KOG1651">
    <property type="taxonomic scope" value="Eukaryota"/>
</dbReference>
<dbReference type="GeneTree" id="ENSGT00940000156150"/>
<dbReference type="InParanoid" id="P04041"/>
<dbReference type="OMA" id="RDYTEMN"/>
<dbReference type="OrthoDB" id="446890at2759"/>
<dbReference type="PhylomeDB" id="P04041"/>
<dbReference type="BRENDA" id="1.11.1.9">
    <property type="organism ID" value="5301"/>
</dbReference>
<dbReference type="Reactome" id="R-RNO-2142712">
    <property type="pathway name" value="Synthesis of 12-eicosatetraenoic acid derivatives"/>
</dbReference>
<dbReference type="Reactome" id="R-RNO-2142770">
    <property type="pathway name" value="Synthesis of 15-eicosatetraenoic acid derivatives"/>
</dbReference>
<dbReference type="Reactome" id="R-RNO-3299685">
    <property type="pathway name" value="Detoxification of Reactive Oxygen Species"/>
</dbReference>
<dbReference type="SABIO-RK" id="P04041"/>
<dbReference type="PRO" id="PR:P04041"/>
<dbReference type="Proteomes" id="UP000002494">
    <property type="component" value="Chromosome 8"/>
</dbReference>
<dbReference type="GO" id="GO:0005737">
    <property type="term" value="C:cytoplasm"/>
    <property type="evidence" value="ECO:0000266"/>
    <property type="project" value="RGD"/>
</dbReference>
<dbReference type="GO" id="GO:0005829">
    <property type="term" value="C:cytosol"/>
    <property type="evidence" value="ECO:0000250"/>
    <property type="project" value="UniProtKB"/>
</dbReference>
<dbReference type="GO" id="GO:0097413">
    <property type="term" value="C:Lewy body"/>
    <property type="evidence" value="ECO:0000266"/>
    <property type="project" value="RGD"/>
</dbReference>
<dbReference type="GO" id="GO:0005739">
    <property type="term" value="C:mitochondrion"/>
    <property type="evidence" value="ECO:0000266"/>
    <property type="project" value="RGD"/>
</dbReference>
<dbReference type="GO" id="GO:0004602">
    <property type="term" value="F:glutathione peroxidase activity"/>
    <property type="evidence" value="ECO:0000314"/>
    <property type="project" value="RGD"/>
</dbReference>
<dbReference type="GO" id="GO:0004601">
    <property type="term" value="F:peroxidase activity"/>
    <property type="evidence" value="ECO:0000266"/>
    <property type="project" value="RGD"/>
</dbReference>
<dbReference type="GO" id="GO:0047066">
    <property type="term" value="F:phospholipid-hydroperoxide glutathione peroxidase activity"/>
    <property type="evidence" value="ECO:0000250"/>
    <property type="project" value="UniProtKB"/>
</dbReference>
<dbReference type="GO" id="GO:1990782">
    <property type="term" value="F:protein tyrosine kinase binding"/>
    <property type="evidence" value="ECO:0007669"/>
    <property type="project" value="Ensembl"/>
</dbReference>
<dbReference type="GO" id="GO:0017124">
    <property type="term" value="F:SH3 domain binding"/>
    <property type="evidence" value="ECO:0000266"/>
    <property type="project" value="RGD"/>
</dbReference>
<dbReference type="GO" id="GO:0060055">
    <property type="term" value="P:angiogenesis involved in wound healing"/>
    <property type="evidence" value="ECO:0000266"/>
    <property type="project" value="RGD"/>
</dbReference>
<dbReference type="GO" id="GO:0006915">
    <property type="term" value="P:apoptotic process"/>
    <property type="evidence" value="ECO:0000266"/>
    <property type="project" value="RGD"/>
</dbReference>
<dbReference type="GO" id="GO:0019369">
    <property type="term" value="P:arachidonate metabolic process"/>
    <property type="evidence" value="ECO:0000250"/>
    <property type="project" value="UniProtKB"/>
</dbReference>
<dbReference type="GO" id="GO:0051702">
    <property type="term" value="P:biological process involved in interaction with symbiont"/>
    <property type="evidence" value="ECO:0000266"/>
    <property type="project" value="RGD"/>
</dbReference>
<dbReference type="GO" id="GO:0043534">
    <property type="term" value="P:blood vessel endothelial cell migration"/>
    <property type="evidence" value="ECO:0000266"/>
    <property type="project" value="RGD"/>
</dbReference>
<dbReference type="GO" id="GO:0045454">
    <property type="term" value="P:cell redox homeostasis"/>
    <property type="evidence" value="ECO:0000266"/>
    <property type="project" value="RGD"/>
</dbReference>
<dbReference type="GO" id="GO:0071333">
    <property type="term" value="P:cellular response to glucose stimulus"/>
    <property type="evidence" value="ECO:0000314"/>
    <property type="project" value="RGD"/>
</dbReference>
<dbReference type="GO" id="GO:0034599">
    <property type="term" value="P:cellular response to oxidative stress"/>
    <property type="evidence" value="ECO:0007669"/>
    <property type="project" value="Ensembl"/>
</dbReference>
<dbReference type="GO" id="GO:0001885">
    <property type="term" value="P:endothelial cell development"/>
    <property type="evidence" value="ECO:0000266"/>
    <property type="project" value="RGD"/>
</dbReference>
<dbReference type="GO" id="GO:0040029">
    <property type="term" value="P:epigenetic regulation of gene expression"/>
    <property type="evidence" value="ECO:0000266"/>
    <property type="project" value="RGD"/>
</dbReference>
<dbReference type="GO" id="GO:0045444">
    <property type="term" value="P:fat cell differentiation"/>
    <property type="evidence" value="ECO:0000266"/>
    <property type="project" value="RGD"/>
</dbReference>
<dbReference type="GO" id="GO:0048144">
    <property type="term" value="P:fibroblast proliferation"/>
    <property type="evidence" value="ECO:0000266"/>
    <property type="project" value="RGD"/>
</dbReference>
<dbReference type="GO" id="GO:0006749">
    <property type="term" value="P:glutathione metabolic process"/>
    <property type="evidence" value="ECO:0000266"/>
    <property type="project" value="RGD"/>
</dbReference>
<dbReference type="GO" id="GO:0060047">
    <property type="term" value="P:heart contraction"/>
    <property type="evidence" value="ECO:0000266"/>
    <property type="project" value="RGD"/>
</dbReference>
<dbReference type="GO" id="GO:0042744">
    <property type="term" value="P:hydrogen peroxide catabolic process"/>
    <property type="evidence" value="ECO:0000266"/>
    <property type="project" value="RGD"/>
</dbReference>
<dbReference type="GO" id="GO:0008631">
    <property type="term" value="P:intrinsic apoptotic signaling pathway in response to oxidative stress"/>
    <property type="evidence" value="ECO:0000266"/>
    <property type="project" value="RGD"/>
</dbReference>
<dbReference type="GO" id="GO:0006629">
    <property type="term" value="P:lipid metabolic process"/>
    <property type="evidence" value="ECO:0000266"/>
    <property type="project" value="RGD"/>
</dbReference>
<dbReference type="GO" id="GO:0019372">
    <property type="term" value="P:lipoxygenase pathway"/>
    <property type="evidence" value="ECO:0000250"/>
    <property type="project" value="UniProtKB"/>
</dbReference>
<dbReference type="GO" id="GO:0045445">
    <property type="term" value="P:myoblast differentiation"/>
    <property type="evidence" value="ECO:0000266"/>
    <property type="project" value="RGD"/>
</dbReference>
<dbReference type="GO" id="GO:0051450">
    <property type="term" value="P:myoblast proliferation"/>
    <property type="evidence" value="ECO:0000266"/>
    <property type="project" value="RGD"/>
</dbReference>
<dbReference type="GO" id="GO:0014902">
    <property type="term" value="P:myotube differentiation"/>
    <property type="evidence" value="ECO:0000266"/>
    <property type="project" value="RGD"/>
</dbReference>
<dbReference type="GO" id="GO:1902042">
    <property type="term" value="P:negative regulation of extrinsic apoptotic signaling pathway via death domain receptors"/>
    <property type="evidence" value="ECO:0000266"/>
    <property type="project" value="RGD"/>
</dbReference>
<dbReference type="GO" id="GO:0002862">
    <property type="term" value="P:negative regulation of inflammatory response to antigenic stimulus"/>
    <property type="evidence" value="ECO:0000266"/>
    <property type="project" value="RGD"/>
</dbReference>
<dbReference type="GO" id="GO:1902176">
    <property type="term" value="P:negative regulation of oxidative stress-induced intrinsic apoptotic signaling pathway"/>
    <property type="evidence" value="ECO:0000266"/>
    <property type="project" value="RGD"/>
</dbReference>
<dbReference type="GO" id="GO:0090201">
    <property type="term" value="P:negative regulation of release of cytochrome c from mitochondria"/>
    <property type="evidence" value="ECO:0000266"/>
    <property type="project" value="RGD"/>
</dbReference>
<dbReference type="GO" id="GO:0051402">
    <property type="term" value="P:neuron apoptotic process"/>
    <property type="evidence" value="ECO:0000266"/>
    <property type="project" value="RGD"/>
</dbReference>
<dbReference type="GO" id="GO:0051897">
    <property type="term" value="P:positive regulation of phosphatidylinositol 3-kinase/protein kinase B signal transduction"/>
    <property type="evidence" value="ECO:0000266"/>
    <property type="project" value="RGD"/>
</dbReference>
<dbReference type="GO" id="GO:0033599">
    <property type="term" value="P:regulation of mammary gland epithelial cell proliferation"/>
    <property type="evidence" value="ECO:0000266"/>
    <property type="project" value="RGD"/>
</dbReference>
<dbReference type="GO" id="GO:0061136">
    <property type="term" value="P:regulation of proteasomal protein catabolic process"/>
    <property type="evidence" value="ECO:0000266"/>
    <property type="project" value="RGD"/>
</dbReference>
<dbReference type="GO" id="GO:0032355">
    <property type="term" value="P:response to estradiol"/>
    <property type="evidence" value="ECO:0000270"/>
    <property type="project" value="RGD"/>
</dbReference>
<dbReference type="GO" id="GO:0051593">
    <property type="term" value="P:response to folic acid"/>
    <property type="evidence" value="ECO:0000270"/>
    <property type="project" value="RGD"/>
</dbReference>
<dbReference type="GO" id="GO:0010332">
    <property type="term" value="P:response to gamma radiation"/>
    <property type="evidence" value="ECO:0000266"/>
    <property type="project" value="RGD"/>
</dbReference>
<dbReference type="GO" id="GO:0009749">
    <property type="term" value="P:response to glucose"/>
    <property type="evidence" value="ECO:0000270"/>
    <property type="project" value="RGD"/>
</dbReference>
<dbReference type="GO" id="GO:0009725">
    <property type="term" value="P:response to hormone"/>
    <property type="evidence" value="ECO:0000270"/>
    <property type="project" value="RGD"/>
</dbReference>
<dbReference type="GO" id="GO:0042542">
    <property type="term" value="P:response to hydrogen peroxide"/>
    <property type="evidence" value="ECO:0000266"/>
    <property type="project" value="RGD"/>
</dbReference>
<dbReference type="GO" id="GO:0033194">
    <property type="term" value="P:response to hydroperoxide"/>
    <property type="evidence" value="ECO:0000266"/>
    <property type="project" value="RGD"/>
</dbReference>
<dbReference type="GO" id="GO:0032496">
    <property type="term" value="P:response to lipopolysaccharide"/>
    <property type="evidence" value="ECO:0000266"/>
    <property type="project" value="RGD"/>
</dbReference>
<dbReference type="GO" id="GO:0035094">
    <property type="term" value="P:response to nicotine"/>
    <property type="evidence" value="ECO:0000270"/>
    <property type="project" value="RGD"/>
</dbReference>
<dbReference type="GO" id="GO:0006979">
    <property type="term" value="P:response to oxidative stress"/>
    <property type="evidence" value="ECO:0000266"/>
    <property type="project" value="RGD"/>
</dbReference>
<dbReference type="GO" id="GO:0000302">
    <property type="term" value="P:response to reactive oxygen species"/>
    <property type="evidence" value="ECO:0000266"/>
    <property type="project" value="RGD"/>
</dbReference>
<dbReference type="GO" id="GO:0010269">
    <property type="term" value="P:response to selenium ion"/>
    <property type="evidence" value="ECO:0000270"/>
    <property type="project" value="RGD"/>
</dbReference>
<dbReference type="GO" id="GO:0009609">
    <property type="term" value="P:response to symbiotic bacterium"/>
    <property type="evidence" value="ECO:0000266"/>
    <property type="project" value="RGD"/>
</dbReference>
<dbReference type="GO" id="GO:0009636">
    <property type="term" value="P:response to toxic substance"/>
    <property type="evidence" value="ECO:0000266"/>
    <property type="project" value="RGD"/>
</dbReference>
<dbReference type="GO" id="GO:0033197">
    <property type="term" value="P:response to vitamin E"/>
    <property type="evidence" value="ECO:0000270"/>
    <property type="project" value="RGD"/>
</dbReference>
<dbReference type="GO" id="GO:0009611">
    <property type="term" value="P:response to wounding"/>
    <property type="evidence" value="ECO:0000266"/>
    <property type="project" value="RGD"/>
</dbReference>
<dbReference type="GO" id="GO:0009410">
    <property type="term" value="P:response to xenobiotic stimulus"/>
    <property type="evidence" value="ECO:0000266"/>
    <property type="project" value="RGD"/>
</dbReference>
<dbReference type="GO" id="GO:0007605">
    <property type="term" value="P:sensory perception of sound"/>
    <property type="evidence" value="ECO:0000266"/>
    <property type="project" value="RGD"/>
</dbReference>
<dbReference type="GO" id="GO:0048741">
    <property type="term" value="P:skeletal muscle fiber development"/>
    <property type="evidence" value="ECO:0000266"/>
    <property type="project" value="RGD"/>
</dbReference>
<dbReference type="GO" id="GO:0043403">
    <property type="term" value="P:skeletal muscle tissue regeneration"/>
    <property type="evidence" value="ECO:0000266"/>
    <property type="project" value="RGD"/>
</dbReference>
<dbReference type="GO" id="GO:0001659">
    <property type="term" value="P:temperature homeostasis"/>
    <property type="evidence" value="ECO:0000266"/>
    <property type="project" value="RGD"/>
</dbReference>
<dbReference type="GO" id="GO:0006641">
    <property type="term" value="P:triglyceride metabolic process"/>
    <property type="evidence" value="ECO:0000266"/>
    <property type="project" value="RGD"/>
</dbReference>
<dbReference type="GO" id="GO:0009650">
    <property type="term" value="P:UV protection"/>
    <property type="evidence" value="ECO:0000266"/>
    <property type="project" value="RGD"/>
</dbReference>
<dbReference type="GO" id="GO:0042311">
    <property type="term" value="P:vasodilation"/>
    <property type="evidence" value="ECO:0000266"/>
    <property type="project" value="RGD"/>
</dbReference>
<dbReference type="CDD" id="cd00340">
    <property type="entry name" value="GSH_Peroxidase"/>
    <property type="match status" value="1"/>
</dbReference>
<dbReference type="FunFam" id="3.40.30.10:FF:000153">
    <property type="entry name" value="Glutathione peroxidase"/>
    <property type="match status" value="1"/>
</dbReference>
<dbReference type="Gene3D" id="3.40.30.10">
    <property type="entry name" value="Glutaredoxin"/>
    <property type="match status" value="1"/>
</dbReference>
<dbReference type="InterPro" id="IPR000889">
    <property type="entry name" value="Glutathione_peroxidase"/>
</dbReference>
<dbReference type="InterPro" id="IPR029759">
    <property type="entry name" value="GPX_AS"/>
</dbReference>
<dbReference type="InterPro" id="IPR029760">
    <property type="entry name" value="GPX_CS"/>
</dbReference>
<dbReference type="InterPro" id="IPR036249">
    <property type="entry name" value="Thioredoxin-like_sf"/>
</dbReference>
<dbReference type="PANTHER" id="PTHR11592">
    <property type="entry name" value="GLUTATHIONE PEROXIDASE"/>
    <property type="match status" value="1"/>
</dbReference>
<dbReference type="PANTHER" id="PTHR11592:SF41">
    <property type="entry name" value="GLUTATHIONE PEROXIDASE 1"/>
    <property type="match status" value="1"/>
</dbReference>
<dbReference type="Pfam" id="PF00255">
    <property type="entry name" value="GSHPx"/>
    <property type="match status" value="1"/>
</dbReference>
<dbReference type="PIRSF" id="PIRSF000303">
    <property type="entry name" value="Glutathion_perox"/>
    <property type="match status" value="1"/>
</dbReference>
<dbReference type="PRINTS" id="PR01011">
    <property type="entry name" value="GLUTPROXDASE"/>
</dbReference>
<dbReference type="SUPFAM" id="SSF52833">
    <property type="entry name" value="Thioredoxin-like"/>
    <property type="match status" value="1"/>
</dbReference>
<dbReference type="PROSITE" id="PS00460">
    <property type="entry name" value="GLUTATHIONE_PEROXID_1"/>
    <property type="match status" value="1"/>
</dbReference>
<dbReference type="PROSITE" id="PS00763">
    <property type="entry name" value="GLUTATHIONE_PEROXID_2"/>
    <property type="match status" value="1"/>
</dbReference>
<dbReference type="PROSITE" id="PS51355">
    <property type="entry name" value="GLUTATHIONE_PEROXID_3"/>
    <property type="match status" value="1"/>
</dbReference>
<accession>P04041</accession>
<accession>O08946</accession>
<accession>Q4PIY2</accession>
<accession>Q91WZ5</accession>
<feature type="chain" id="PRO_0000066617" description="Glutathione peroxidase 1">
    <location>
        <begin position="1"/>
        <end position="201"/>
    </location>
</feature>
<feature type="active site" evidence="2">
    <location>
        <position position="47"/>
    </location>
</feature>
<feature type="site" description="Subject to oxidation and hydroselenide loss to dehydroalanine" evidence="1">
    <location>
        <position position="47"/>
    </location>
</feature>
<feature type="non-standard amino acid" description="Selenocysteine" evidence="6">
    <location>
        <position position="47"/>
    </location>
</feature>
<feature type="modified residue" description="Phosphoserine" evidence="9">
    <location>
        <position position="32"/>
    </location>
</feature>
<feature type="modified residue" description="N6-acetyllysine; alternate" evidence="4">
    <location>
        <position position="86"/>
    </location>
</feature>
<feature type="modified residue" description="N6-succinyllysine; alternate" evidence="4">
    <location>
        <position position="86"/>
    </location>
</feature>
<feature type="modified residue" description="N6-acetyllysine; alternate" evidence="4">
    <location>
        <position position="112"/>
    </location>
</feature>
<feature type="modified residue" description="N6-succinyllysine; alternate" evidence="4">
    <location>
        <position position="112"/>
    </location>
</feature>
<feature type="modified residue" description="N6-acetyllysine" evidence="4">
    <location>
        <position position="119"/>
    </location>
</feature>
<feature type="modified residue" description="N6-acetyllysine; alternate" evidence="4">
    <location>
        <position position="146"/>
    </location>
</feature>
<feature type="modified residue" description="N6-succinyllysine; alternate" evidence="4">
    <location>
        <position position="146"/>
    </location>
</feature>
<feature type="modified residue" description="Phosphoserine" evidence="9">
    <location>
        <position position="195"/>
    </location>
</feature>
<feature type="modified residue" description="Phosphoserine" evidence="3">
    <location>
        <position position="199"/>
    </location>
</feature>
<feature type="sequence conflict" description="In Ref. 1; AAB95647." evidence="7" ref="1">
    <original>GG</original>
    <variation>RE</variation>
    <location>
        <begin position="24"/>
        <end position="25"/>
    </location>
</feature>
<feature type="sequence conflict" description="In Ref. 1; AAB95647." evidence="7" ref="1">
    <original>C</original>
    <variation>S</variation>
    <location>
        <position position="154"/>
    </location>
</feature>
<feature type="sequence conflict" description="In Ref. 1; AAB95647." evidence="7" ref="1">
    <original>S</original>
    <variation>T</variation>
    <location>
        <position position="178"/>
    </location>
</feature>
<feature type="sequence conflict" description="In Ref. 1; AAB95647." evidence="7" ref="1">
    <original>P</original>
    <variation>S</variation>
    <location>
        <position position="198"/>
    </location>
</feature>
<reference key="1">
    <citation type="journal article" date="1988" name="Biochem. Biophys. Res. Commun.">
        <title>Determination of nucleotide sequence of cDNA coding rat glutathione peroxidase and diminished expression of the mRNA in selenium deficient rat liver.</title>
        <authorList>
            <person name="Yoshimura S."/>
            <person name="Takekoshi S."/>
            <person name="Watanabe K."/>
            <person name="Fujii-Kuriyama Y."/>
        </authorList>
    </citation>
    <scope>NUCLEOTIDE SEQUENCE [MRNA]</scope>
</reference>
<reference key="2">
    <citation type="journal article" date="1988" name="Nucleic Acids Res.">
        <title>Nucleotide sequence of a rat glutathione peroxidase cDNA.</title>
        <authorList>
            <person name="Ho Y.S."/>
            <person name="Howard A.J."/>
            <person name="Crapo J.D."/>
        </authorList>
    </citation>
    <scope>NUCLEOTIDE SEQUENCE [MRNA]</scope>
    <source>
        <strain>Sprague-Dawley</strain>
        <tissue>Liver</tissue>
    </source>
</reference>
<reference key="3">
    <citation type="journal article" date="1988" name="Nucleic Acids Res.">
        <title>Expression of glutathione peroxidase I gene in selenium-deficient rats.</title>
        <authorList>
            <person name="Reddy A.P."/>
            <person name="Hsu B.L."/>
            <person name="Reddy P.S."/>
            <person name="Li N.Q."/>
            <person name="Thyagaraju K."/>
            <person name="Reddy C.C."/>
            <person name="Tam M.F."/>
            <person name="Tu C.P.D."/>
        </authorList>
    </citation>
    <scope>NUCLEOTIDE SEQUENCE [MRNA]</scope>
</reference>
<reference key="4">
    <citation type="submission" date="2010-12" db="EMBL/GenBank/DDBJ databases">
        <authorList>
            <person name="Reddy A.P."/>
            <person name="Hsu B.L."/>
            <person name="Reddy P.S."/>
            <person name="Li N.Q."/>
            <person name="Thyagaraju K."/>
            <person name="Reddy C.C."/>
            <person name="Tam M.F."/>
            <person name="Tu C.P.D."/>
        </authorList>
    </citation>
    <scope>SEQUENCE REVISION TO 47</scope>
</reference>
<reference key="5">
    <citation type="journal article" date="1992" name="FEBS Lett.">
        <title>Cloning and characterization of the rat glutathione peroxidase gene.</title>
        <authorList>
            <person name="Ho Y.-S."/>
            <person name="Howard A.J."/>
        </authorList>
    </citation>
    <scope>NUCLEOTIDE SEQUENCE [GENOMIC DNA / MRNA]</scope>
    <scope>TISSUE SPECIFICITY</scope>
    <source>
        <strain>Sprague-Dawley</strain>
    </source>
</reference>
<reference key="6">
    <citation type="journal article" date="1992" name="J. Nutr.">
        <title>Dietary selenium stabilizes glutathione peroxidase mRNA in rat liver.</title>
        <authorList>
            <person name="Christensen M.J."/>
            <person name="Burgener K.W."/>
        </authorList>
    </citation>
    <scope>NUCLEOTIDE SEQUENCE [MRNA]</scope>
    <source>
        <strain>Sprague-Dawley</strain>
        <tissue>Liver</tissue>
    </source>
</reference>
<reference key="7">
    <citation type="submission" date="1997-06" db="EMBL/GenBank/DDBJ databases">
        <title>Functional analysis of the 5'-flanking region of the rat glutathione peroxidase gene.</title>
        <authorList>
            <person name="Suemizu H."/>
        </authorList>
    </citation>
    <scope>NUCLEOTIDE SEQUENCE [GENOMIC DNA] OF 1-82</scope>
    <source>
        <strain>Sprague-Dawley</strain>
    </source>
</reference>
<reference key="8">
    <citation type="journal article" date="1982" name="Biochim. Biophys. Acta">
        <title>Amino acid sequence around the active-site selenocysteine of rat liver glutathione peroxidase.</title>
        <authorList>
            <person name="Condell R.A."/>
            <person name="Tappel A.L."/>
        </authorList>
    </citation>
    <scope>PROTEIN SEQUENCE OF 7-52</scope>
    <scope>SELENOCYSTEINE AT SEC-47</scope>
    <source>
        <tissue>Liver</tissue>
    </source>
</reference>
<reference key="9">
    <citation type="submission" date="2006-11" db="UniProtKB">
        <authorList>
            <person name="Lubec G."/>
            <person name="Afjehi-Sadat L."/>
        </authorList>
    </citation>
    <scope>PROTEIN SEQUENCE OF 96-112 AND 165-176</scope>
    <scope>IDENTIFICATION BY MASS SPECTROMETRY</scope>
    <source>
        <strain>Sprague-Dawley</strain>
        <tissue>Spinal cord</tissue>
    </source>
</reference>
<reference key="10">
    <citation type="journal article" date="2012" name="Nat. Commun.">
        <title>Quantitative maps of protein phosphorylation sites across 14 different rat organs and tissues.</title>
        <authorList>
            <person name="Lundby A."/>
            <person name="Secher A."/>
            <person name="Lage K."/>
            <person name="Nordsborg N.B."/>
            <person name="Dmytriyev A."/>
            <person name="Lundby C."/>
            <person name="Olsen J.V."/>
        </authorList>
    </citation>
    <scope>PHOSPHORYLATION [LARGE SCALE ANALYSIS] AT SER-32 AND SER-195</scope>
    <scope>IDENTIFICATION BY MASS SPECTROMETRY [LARGE SCALE ANALYSIS]</scope>
</reference>
<keyword id="KW-0007">Acetylation</keyword>
<keyword id="KW-0963">Cytoplasm</keyword>
<keyword id="KW-0903">Direct protein sequencing</keyword>
<keyword id="KW-0443">Lipid metabolism</keyword>
<keyword id="KW-0496">Mitochondrion</keyword>
<keyword id="KW-0560">Oxidoreductase</keyword>
<keyword id="KW-0575">Peroxidase</keyword>
<keyword id="KW-0597">Phosphoprotein</keyword>
<keyword id="KW-1185">Reference proteome</keyword>
<keyword id="KW-0712">Selenocysteine</keyword>
<proteinExistence type="evidence at protein level"/>
<name>GPX1_RAT</name>
<sequence>MSAARLSAVAQSTVYAFSARPLAGGEPVSLGSLRGKVLLIENVASLUGTTTRDYTEMNDLQKRLGPRGLVVLGFPCNQFGHQENGKNEEILNSLKYVRPGGGFEPNFTLFEKCEVNGEKAHPLFTFLRNALPAPSDDPTALMTDPKYIIWSPVCRNDISWNFEKFLVGPDGVPVRRYSRRFRTIDIEPDIEALLSKQPSNP</sequence>
<evidence type="ECO:0000250" key="1"/>
<evidence type="ECO:0000250" key="2">
    <source>
        <dbReference type="UniProtKB" id="O70325"/>
    </source>
</evidence>
<evidence type="ECO:0000250" key="3">
    <source>
        <dbReference type="UniProtKB" id="P07203"/>
    </source>
</evidence>
<evidence type="ECO:0000250" key="4">
    <source>
        <dbReference type="UniProtKB" id="P11352"/>
    </source>
</evidence>
<evidence type="ECO:0000269" key="5">
    <source>
    </source>
</evidence>
<evidence type="ECO:0000269" key="6">
    <source>
    </source>
</evidence>
<evidence type="ECO:0000305" key="7"/>
<evidence type="ECO:0000312" key="8">
    <source>
        <dbReference type="RGD" id="2729"/>
    </source>
</evidence>
<evidence type="ECO:0007744" key="9">
    <source>
    </source>
</evidence>
<gene>
    <name evidence="8" type="primary">Gpx1</name>
</gene>